<evidence type="ECO:0000269" key="1">
    <source>
    </source>
</evidence>
<evidence type="ECO:0000269" key="2">
    <source>
    </source>
</evidence>
<evidence type="ECO:0000303" key="3">
    <source>
    </source>
</evidence>
<evidence type="ECO:0000305" key="4"/>
<evidence type="ECO:0000305" key="5">
    <source>
    </source>
</evidence>
<evidence type="ECO:0007744" key="6">
    <source>
    </source>
</evidence>
<keyword id="KW-0119">Carbohydrate metabolism</keyword>
<keyword id="KW-0963">Cytoplasm</keyword>
<keyword id="KW-0968">Cytoplasmic vesicle</keyword>
<keyword id="KW-0321">Glycogen metabolism</keyword>
<keyword id="KW-0597">Phosphoprotein</keyword>
<keyword id="KW-1185">Reference proteome</keyword>
<dbReference type="EMBL" id="Z46881">
    <property type="protein sequence ID" value="CAA86968.1"/>
    <property type="molecule type" value="Genomic_DNA"/>
</dbReference>
<dbReference type="EMBL" id="AY558553">
    <property type="protein sequence ID" value="AAS56879.1"/>
    <property type="molecule type" value="Genomic_DNA"/>
</dbReference>
<dbReference type="EMBL" id="BK006942">
    <property type="protein sequence ID" value="DAA08521.1"/>
    <property type="molecule type" value="Genomic_DNA"/>
</dbReference>
<dbReference type="PIR" id="S49958">
    <property type="entry name" value="S49958"/>
</dbReference>
<dbReference type="RefSeq" id="NP_012240.3">
    <property type="nucleotide sequence ID" value="NM_001179374.3"/>
</dbReference>
<dbReference type="SMR" id="P40543"/>
<dbReference type="BioGRID" id="34964">
    <property type="interactions" value="34"/>
</dbReference>
<dbReference type="DIP" id="DIP-4358N"/>
<dbReference type="FunCoup" id="P40543">
    <property type="interactions" value="24"/>
</dbReference>
<dbReference type="iPTMnet" id="P40543"/>
<dbReference type="PaxDb" id="4932-YIL024C"/>
<dbReference type="PeptideAtlas" id="P40543"/>
<dbReference type="EnsemblFungi" id="YIL024C_mRNA">
    <property type="protein sequence ID" value="YIL024C"/>
    <property type="gene ID" value="YIL024C"/>
</dbReference>
<dbReference type="GeneID" id="854788"/>
<dbReference type="KEGG" id="sce:YIL024C"/>
<dbReference type="AGR" id="SGD:S000001286"/>
<dbReference type="SGD" id="S000001286">
    <property type="gene designation" value="ATG45"/>
</dbReference>
<dbReference type="VEuPathDB" id="FungiDB:YIL024C"/>
<dbReference type="eggNOG" id="ENOG502S4ZU">
    <property type="taxonomic scope" value="Eukaryota"/>
</dbReference>
<dbReference type="HOGENOM" id="CLU_073112_0_0_1"/>
<dbReference type="InParanoid" id="P40543"/>
<dbReference type="OMA" id="VINDKKW"/>
<dbReference type="OrthoDB" id="5873279at2759"/>
<dbReference type="BioCyc" id="YEAST:G3O-31299-MONOMER"/>
<dbReference type="BioGRID-ORCS" id="854788">
    <property type="hits" value="0 hits in 10 CRISPR screens"/>
</dbReference>
<dbReference type="ChiTaRS" id="YIL024C">
    <property type="organism name" value="yeast"/>
</dbReference>
<dbReference type="PRO" id="PR:P40543"/>
<dbReference type="Proteomes" id="UP000002311">
    <property type="component" value="Chromosome IX"/>
</dbReference>
<dbReference type="RNAct" id="P40543">
    <property type="molecule type" value="protein"/>
</dbReference>
<dbReference type="GO" id="GO:0005776">
    <property type="term" value="C:autophagosome"/>
    <property type="evidence" value="ECO:0000314"/>
    <property type="project" value="SGD"/>
</dbReference>
<dbReference type="GO" id="GO:0031410">
    <property type="term" value="C:cytoplasmic vesicle"/>
    <property type="evidence" value="ECO:0007669"/>
    <property type="project" value="UniProtKB-KW"/>
</dbReference>
<dbReference type="GO" id="GO:0005829">
    <property type="term" value="C:cytosol"/>
    <property type="evidence" value="ECO:0000314"/>
    <property type="project" value="SGD"/>
</dbReference>
<dbReference type="GO" id="GO:0160183">
    <property type="term" value="F:autophagosome-membrane adaptor activity"/>
    <property type="evidence" value="ECO:0000314"/>
    <property type="project" value="UniProtKB"/>
</dbReference>
<dbReference type="GO" id="GO:2001069">
    <property type="term" value="F:glycogen binding"/>
    <property type="evidence" value="ECO:0000314"/>
    <property type="project" value="SGD"/>
</dbReference>
<dbReference type="GO" id="GO:0030437">
    <property type="term" value="P:ascospore formation"/>
    <property type="evidence" value="ECO:0000315"/>
    <property type="project" value="SGD"/>
</dbReference>
<dbReference type="GO" id="GO:0006995">
    <property type="term" value="P:cellular response to nitrogen starvation"/>
    <property type="evidence" value="ECO:0000315"/>
    <property type="project" value="SGD"/>
</dbReference>
<dbReference type="GO" id="GO:0061723">
    <property type="term" value="P:glycophagy"/>
    <property type="evidence" value="ECO:0000315"/>
    <property type="project" value="SGD"/>
</dbReference>
<dbReference type="CDD" id="cd02859">
    <property type="entry name" value="E_set_AMPKbeta_like_N"/>
    <property type="match status" value="1"/>
</dbReference>
<dbReference type="Gene3D" id="2.60.40.10">
    <property type="entry name" value="Immunoglobulins"/>
    <property type="match status" value="1"/>
</dbReference>
<dbReference type="InterPro" id="IPR032640">
    <property type="entry name" value="AMPK1_CBM"/>
</dbReference>
<dbReference type="InterPro" id="IPR013783">
    <property type="entry name" value="Ig-like_fold"/>
</dbReference>
<dbReference type="InterPro" id="IPR014756">
    <property type="entry name" value="Ig_E-set"/>
</dbReference>
<dbReference type="Pfam" id="PF16561">
    <property type="entry name" value="AMPK1_CBM"/>
    <property type="match status" value="1"/>
</dbReference>
<dbReference type="SUPFAM" id="SSF81296">
    <property type="entry name" value="E set domains"/>
    <property type="match status" value="1"/>
</dbReference>
<sequence length="189" mass="21791">MSNFLLVIPEDVIKGCSKADKLVVTGEFDNWRHSDYVLQYDGSTQNYRVQIPRRKGQRSTMFKVVINDKKWVTLNYFDTVTDKSGYTNNILHFKDNEASQLMDIPLSPHTRSNTAKGKPEDDSLNDYVNLSSHSDLSSTEEIVCWNSDMEDENMDATIQCDFHQAFNSRKESLNGLMCIAKKVKTYWNK</sequence>
<name>ATG45_YEAST</name>
<comment type="function">
    <text evidence="2">Autophagy receptor for glycogen that facilitates the sequestration of glycogen assemblies into autophagosomes as part of bulk autophagy; the autophagy of glycogen (glycophagy) is stimulated during prolonged nitrogen starvation and during sporulation.</text>
</comment>
<comment type="subunit">
    <text evidence="2">Interacts with ATG8.</text>
</comment>
<comment type="subcellular location">
    <subcellularLocation>
        <location evidence="2">Cytoplasm</location>
        <location evidence="2">Cytosol</location>
    </subcellularLocation>
    <subcellularLocation>
        <location evidence="2">Cytoplasmic vesicle</location>
        <location evidence="2">Autophagosome</location>
    </subcellularLocation>
    <text evidence="2 5">Localizes to glycogen granules (glycosomes) in the cytosol (Probable). Localizes to autophagosomes during nitrogen starvation (PubMed:38832010).</text>
</comment>
<comment type="induction">
    <text evidence="2">Induced during prolonged nitrogen starvation.</text>
</comment>
<comment type="disruption phenotype">
    <text evidence="2">Disrupts glycophagy (autophagy of glycogen).</text>
</comment>
<comment type="miscellaneous">
    <text evidence="1">Present with 1540 molecules/cell in log phase SD medium.</text>
</comment>
<gene>
    <name evidence="3" type="primary">ATG45</name>
    <name type="ordered locus">YIL024C</name>
</gene>
<proteinExistence type="evidence at protein level"/>
<reference key="1">
    <citation type="journal article" date="1997" name="Nature">
        <title>The nucleotide sequence of Saccharomyces cerevisiae chromosome IX.</title>
        <authorList>
            <person name="Churcher C.M."/>
            <person name="Bowman S."/>
            <person name="Badcock K."/>
            <person name="Bankier A.T."/>
            <person name="Brown D."/>
            <person name="Chillingworth T."/>
            <person name="Connor R."/>
            <person name="Devlin K."/>
            <person name="Gentles S."/>
            <person name="Hamlin N."/>
            <person name="Harris D.E."/>
            <person name="Horsnell T."/>
            <person name="Hunt S."/>
            <person name="Jagels K."/>
            <person name="Jones M."/>
            <person name="Lye G."/>
            <person name="Moule S."/>
            <person name="Odell C."/>
            <person name="Pearson D."/>
            <person name="Rajandream M.A."/>
            <person name="Rice P."/>
            <person name="Rowley N."/>
            <person name="Skelton J."/>
            <person name="Smith V."/>
            <person name="Walsh S.V."/>
            <person name="Whitehead S."/>
            <person name="Barrell B.G."/>
        </authorList>
    </citation>
    <scope>NUCLEOTIDE SEQUENCE [LARGE SCALE GENOMIC DNA]</scope>
    <source>
        <strain>ATCC 204508 / S288c</strain>
    </source>
</reference>
<reference key="2">
    <citation type="journal article" date="2014" name="G3 (Bethesda)">
        <title>The reference genome sequence of Saccharomyces cerevisiae: Then and now.</title>
        <authorList>
            <person name="Engel S.R."/>
            <person name="Dietrich F.S."/>
            <person name="Fisk D.G."/>
            <person name="Binkley G."/>
            <person name="Balakrishnan R."/>
            <person name="Costanzo M.C."/>
            <person name="Dwight S.S."/>
            <person name="Hitz B.C."/>
            <person name="Karra K."/>
            <person name="Nash R.S."/>
            <person name="Weng S."/>
            <person name="Wong E.D."/>
            <person name="Lloyd P."/>
            <person name="Skrzypek M.S."/>
            <person name="Miyasato S.R."/>
            <person name="Simison M."/>
            <person name="Cherry J.M."/>
        </authorList>
    </citation>
    <scope>GENOME REANNOTATION</scope>
    <source>
        <strain>ATCC 204508 / S288c</strain>
    </source>
</reference>
<reference key="3">
    <citation type="journal article" date="2007" name="Genome Res.">
        <title>Approaching a complete repository of sequence-verified protein-encoding clones for Saccharomyces cerevisiae.</title>
        <authorList>
            <person name="Hu Y."/>
            <person name="Rolfs A."/>
            <person name="Bhullar B."/>
            <person name="Murthy T.V.S."/>
            <person name="Zhu C."/>
            <person name="Berger M.F."/>
            <person name="Camargo A.A."/>
            <person name="Kelley F."/>
            <person name="McCarron S."/>
            <person name="Jepson D."/>
            <person name="Richardson A."/>
            <person name="Raphael J."/>
            <person name="Moreira D."/>
            <person name="Taycher E."/>
            <person name="Zuo D."/>
            <person name="Mohr S."/>
            <person name="Kane M.F."/>
            <person name="Williamson J."/>
            <person name="Simpson A.J.G."/>
            <person name="Bulyk M.L."/>
            <person name="Harlow E."/>
            <person name="Marsischky G."/>
            <person name="Kolodner R.D."/>
            <person name="LaBaer J."/>
        </authorList>
    </citation>
    <scope>NUCLEOTIDE SEQUENCE [GENOMIC DNA]</scope>
    <source>
        <strain>ATCC 204508 / S288c</strain>
    </source>
</reference>
<reference key="4">
    <citation type="journal article" date="2003" name="Nature">
        <title>Global analysis of protein expression in yeast.</title>
        <authorList>
            <person name="Ghaemmaghami S."/>
            <person name="Huh W.-K."/>
            <person name="Bower K."/>
            <person name="Howson R.W."/>
            <person name="Belle A."/>
            <person name="Dephoure N."/>
            <person name="O'Shea E.K."/>
            <person name="Weissman J.S."/>
        </authorList>
    </citation>
    <scope>LEVEL OF PROTEIN EXPRESSION [LARGE SCALE ANALYSIS]</scope>
</reference>
<reference key="5">
    <citation type="journal article" date="2009" name="Science">
        <title>Global analysis of Cdk1 substrate phosphorylation sites provides insights into evolution.</title>
        <authorList>
            <person name="Holt L.J."/>
            <person name="Tuch B.B."/>
            <person name="Villen J."/>
            <person name="Johnson A.D."/>
            <person name="Gygi S.P."/>
            <person name="Morgan D.O."/>
        </authorList>
    </citation>
    <scope>PHOSPHORYLATION [LARGE SCALE ANALYSIS] AT SER-107 AND SER-172</scope>
    <scope>IDENTIFICATION BY MASS SPECTROMETRY [LARGE SCALE ANALYSIS]</scope>
</reference>
<reference key="6">
    <citation type="journal article" date="2024" name="IScience">
        <title>Atg45 is an autophagy receptor for glycogen, a non-preferred cargo of bulk autophagy in yeast.</title>
        <authorList>
            <person name="Isoda T."/>
            <person name="Takeda E."/>
            <person name="Hosokawa S."/>
            <person name="Hotta-Ren S."/>
            <person name="Ohsumi Y."/>
        </authorList>
    </citation>
    <scope>FUNCTION</scope>
    <scope>INTERACTION WITH ATG8</scope>
    <scope>SUBCELLULAR LOCATION</scope>
    <scope>INDUCTION</scope>
    <scope>DISRUPTION PHENOTYPE</scope>
    <scope>MOTIF</scope>
    <scope>MUTAGENESIS OF 127-TYR--LEU-130 AND 176-LEU--TRP-187</scope>
</reference>
<accession>P40543</accession>
<accession>D6VVQ5</accession>
<feature type="chain" id="PRO_0000203000" description="Autophagy receptor ATG45">
    <location>
        <begin position="1"/>
        <end position="189"/>
    </location>
</feature>
<feature type="region of interest" description="Binds glycogen" evidence="2">
    <location>
        <begin position="1"/>
        <end position="96"/>
    </location>
</feature>
<feature type="region of interest" description="Required for sequestration into autophagosomes" evidence="2">
    <location>
        <begin position="97"/>
        <end position="189"/>
    </location>
</feature>
<feature type="region of interest" description="May facilitate interactions with the autophagosome membrane" evidence="2">
    <location>
        <begin position="176"/>
        <end position="187"/>
    </location>
</feature>
<feature type="short sequence motif" description="ATG8 interaction motif (AIM)" evidence="2">
    <location>
        <begin position="127"/>
        <end position="130"/>
    </location>
</feature>
<feature type="modified residue" description="Phosphoserine" evidence="6">
    <location>
        <position position="107"/>
    </location>
</feature>
<feature type="modified residue" description="Phosphoserine" evidence="6">
    <location>
        <position position="172"/>
    </location>
</feature>
<feature type="mutagenesis site" description="Decreases interaction with ATG8." evidence="2">
    <original>YVNL</original>
    <variation>AVNA</variation>
    <location>
        <begin position="127"/>
        <end position="130"/>
    </location>
</feature>
<feature type="mutagenesis site" description="Impairs glycophagy (autophagy of glycogen)." evidence="2">
    <original>LMCIAKKVKTYW</original>
    <variation>AMCAAKKAKTAA</variation>
    <location>
        <begin position="176"/>
        <end position="187"/>
    </location>
</feature>
<protein>
    <recommendedName>
        <fullName evidence="4">Autophagy receptor ATG45</fullName>
    </recommendedName>
    <alternativeName>
        <fullName evidence="4">Autophagy-related protein 45</fullName>
    </alternativeName>
</protein>
<organism>
    <name type="scientific">Saccharomyces cerevisiae (strain ATCC 204508 / S288c)</name>
    <name type="common">Baker's yeast</name>
    <dbReference type="NCBI Taxonomy" id="559292"/>
    <lineage>
        <taxon>Eukaryota</taxon>
        <taxon>Fungi</taxon>
        <taxon>Dikarya</taxon>
        <taxon>Ascomycota</taxon>
        <taxon>Saccharomycotina</taxon>
        <taxon>Saccharomycetes</taxon>
        <taxon>Saccharomycetales</taxon>
        <taxon>Saccharomycetaceae</taxon>
        <taxon>Saccharomyces</taxon>
    </lineage>
</organism>